<dbReference type="EC" id="6.1.1.22"/>
<dbReference type="EMBL" id="CR382135">
    <property type="protein sequence ID" value="CAG86350.1"/>
    <property type="molecule type" value="Genomic_DNA"/>
</dbReference>
<dbReference type="RefSeq" id="XP_458273.1">
    <property type="nucleotide sequence ID" value="XM_458273.1"/>
</dbReference>
<dbReference type="SMR" id="Q6BU46"/>
<dbReference type="FunCoup" id="Q6BU46">
    <property type="interactions" value="954"/>
</dbReference>
<dbReference type="STRING" id="284592.Q6BU46"/>
<dbReference type="GeneID" id="2900062"/>
<dbReference type="KEGG" id="dha:DEHA2C13684g"/>
<dbReference type="eggNOG" id="KOG0555">
    <property type="taxonomic scope" value="Eukaryota"/>
</dbReference>
<dbReference type="HOGENOM" id="CLU_004553_2_10_1"/>
<dbReference type="InParanoid" id="Q6BU46"/>
<dbReference type="OMA" id="DCCLYPR"/>
<dbReference type="OrthoDB" id="1931232at2759"/>
<dbReference type="Proteomes" id="UP000000599">
    <property type="component" value="Chromosome C"/>
</dbReference>
<dbReference type="GO" id="GO:0005737">
    <property type="term" value="C:cytoplasm"/>
    <property type="evidence" value="ECO:0007669"/>
    <property type="project" value="UniProtKB-SubCell"/>
</dbReference>
<dbReference type="GO" id="GO:0004816">
    <property type="term" value="F:asparagine-tRNA ligase activity"/>
    <property type="evidence" value="ECO:0007669"/>
    <property type="project" value="UniProtKB-EC"/>
</dbReference>
<dbReference type="GO" id="GO:0005524">
    <property type="term" value="F:ATP binding"/>
    <property type="evidence" value="ECO:0007669"/>
    <property type="project" value="UniProtKB-KW"/>
</dbReference>
<dbReference type="GO" id="GO:1990825">
    <property type="term" value="F:sequence-specific mRNA binding"/>
    <property type="evidence" value="ECO:0007669"/>
    <property type="project" value="EnsemblFungi"/>
</dbReference>
<dbReference type="GO" id="GO:0006421">
    <property type="term" value="P:asparaginyl-tRNA aminoacylation"/>
    <property type="evidence" value="ECO:0007669"/>
    <property type="project" value="EnsemblFungi"/>
</dbReference>
<dbReference type="CDD" id="cd04323">
    <property type="entry name" value="AsnRS_cyto_like_N"/>
    <property type="match status" value="1"/>
</dbReference>
<dbReference type="CDD" id="cd00776">
    <property type="entry name" value="AsxRS_core"/>
    <property type="match status" value="1"/>
</dbReference>
<dbReference type="FunFam" id="3.30.930.10:FF:000040">
    <property type="entry name" value="Asparagine--tRNA ligase, cytoplasmic"/>
    <property type="match status" value="1"/>
</dbReference>
<dbReference type="Gene3D" id="3.30.1910.20">
    <property type="entry name" value="asparaginyl-tRNA synthetase, N-terminal domain"/>
    <property type="match status" value="1"/>
</dbReference>
<dbReference type="Gene3D" id="3.30.930.10">
    <property type="entry name" value="Bira Bifunctional Protein, Domain 2"/>
    <property type="match status" value="1"/>
</dbReference>
<dbReference type="Gene3D" id="2.40.50.140">
    <property type="entry name" value="Nucleic acid-binding proteins"/>
    <property type="match status" value="1"/>
</dbReference>
<dbReference type="InterPro" id="IPR004364">
    <property type="entry name" value="Aa-tRNA-synt_II"/>
</dbReference>
<dbReference type="InterPro" id="IPR006195">
    <property type="entry name" value="aa-tRNA-synth_II"/>
</dbReference>
<dbReference type="InterPro" id="IPR045864">
    <property type="entry name" value="aa-tRNA-synth_II/BPL/LPL"/>
</dbReference>
<dbReference type="InterPro" id="IPR004522">
    <property type="entry name" value="Asn-tRNA-ligase"/>
</dbReference>
<dbReference type="InterPro" id="IPR048952">
    <property type="entry name" value="AsnRS_N"/>
</dbReference>
<dbReference type="InterPro" id="IPR002312">
    <property type="entry name" value="Asp/Asn-tRNA-synth_IIb"/>
</dbReference>
<dbReference type="InterPro" id="IPR012340">
    <property type="entry name" value="NA-bd_OB-fold"/>
</dbReference>
<dbReference type="InterPro" id="IPR004365">
    <property type="entry name" value="NA-bd_OB_tRNA"/>
</dbReference>
<dbReference type="NCBIfam" id="TIGR00457">
    <property type="entry name" value="asnS"/>
    <property type="match status" value="1"/>
</dbReference>
<dbReference type="PANTHER" id="PTHR22594:SF16">
    <property type="entry name" value="ASPARAGINE--TRNA LIGASE, CYTOPLASMIC"/>
    <property type="match status" value="1"/>
</dbReference>
<dbReference type="PANTHER" id="PTHR22594">
    <property type="entry name" value="ASPARTYL/LYSYL-TRNA SYNTHETASE"/>
    <property type="match status" value="1"/>
</dbReference>
<dbReference type="Pfam" id="PF20917">
    <property type="entry name" value="AsnRS_N"/>
    <property type="match status" value="1"/>
</dbReference>
<dbReference type="Pfam" id="PF00152">
    <property type="entry name" value="tRNA-synt_2"/>
    <property type="match status" value="1"/>
</dbReference>
<dbReference type="Pfam" id="PF01336">
    <property type="entry name" value="tRNA_anti-codon"/>
    <property type="match status" value="1"/>
</dbReference>
<dbReference type="PRINTS" id="PR01042">
    <property type="entry name" value="TRNASYNTHASP"/>
</dbReference>
<dbReference type="SUPFAM" id="SSF55681">
    <property type="entry name" value="Class II aaRS and biotin synthetases"/>
    <property type="match status" value="1"/>
</dbReference>
<dbReference type="SUPFAM" id="SSF50249">
    <property type="entry name" value="Nucleic acid-binding proteins"/>
    <property type="match status" value="1"/>
</dbReference>
<dbReference type="PROSITE" id="PS50862">
    <property type="entry name" value="AA_TRNA_LIGASE_II"/>
    <property type="match status" value="1"/>
</dbReference>
<feature type="chain" id="PRO_0000176498" description="Asparagine--tRNA ligase, cytoplasmic">
    <location>
        <begin position="1"/>
        <end position="552"/>
    </location>
</feature>
<feature type="region of interest" description="Disordered" evidence="2">
    <location>
        <begin position="1"/>
        <end position="23"/>
    </location>
</feature>
<feature type="compositionally biased region" description="Polar residues" evidence="2">
    <location>
        <begin position="12"/>
        <end position="23"/>
    </location>
</feature>
<proteinExistence type="inferred from homology"/>
<gene>
    <name type="primary">DED81</name>
    <name type="ordered locus">DEHA2C13684g</name>
</gene>
<organism>
    <name type="scientific">Debaryomyces hansenii (strain ATCC 36239 / CBS 767 / BCRC 21394 / JCM 1990 / NBRC 0083 / IGC 2968)</name>
    <name type="common">Yeast</name>
    <name type="synonym">Torulaspora hansenii</name>
    <dbReference type="NCBI Taxonomy" id="284592"/>
    <lineage>
        <taxon>Eukaryota</taxon>
        <taxon>Fungi</taxon>
        <taxon>Dikarya</taxon>
        <taxon>Ascomycota</taxon>
        <taxon>Saccharomycotina</taxon>
        <taxon>Pichiomycetes</taxon>
        <taxon>Debaryomycetaceae</taxon>
        <taxon>Debaryomyces</taxon>
    </lineage>
</organism>
<reference key="1">
    <citation type="journal article" date="2004" name="Nature">
        <title>Genome evolution in yeasts.</title>
        <authorList>
            <person name="Dujon B."/>
            <person name="Sherman D."/>
            <person name="Fischer G."/>
            <person name="Durrens P."/>
            <person name="Casaregola S."/>
            <person name="Lafontaine I."/>
            <person name="de Montigny J."/>
            <person name="Marck C."/>
            <person name="Neuveglise C."/>
            <person name="Talla E."/>
            <person name="Goffard N."/>
            <person name="Frangeul L."/>
            <person name="Aigle M."/>
            <person name="Anthouard V."/>
            <person name="Babour A."/>
            <person name="Barbe V."/>
            <person name="Barnay S."/>
            <person name="Blanchin S."/>
            <person name="Beckerich J.-M."/>
            <person name="Beyne E."/>
            <person name="Bleykasten C."/>
            <person name="Boisrame A."/>
            <person name="Boyer J."/>
            <person name="Cattolico L."/>
            <person name="Confanioleri F."/>
            <person name="de Daruvar A."/>
            <person name="Despons L."/>
            <person name="Fabre E."/>
            <person name="Fairhead C."/>
            <person name="Ferry-Dumazet H."/>
            <person name="Groppi A."/>
            <person name="Hantraye F."/>
            <person name="Hennequin C."/>
            <person name="Jauniaux N."/>
            <person name="Joyet P."/>
            <person name="Kachouri R."/>
            <person name="Kerrest A."/>
            <person name="Koszul R."/>
            <person name="Lemaire M."/>
            <person name="Lesur I."/>
            <person name="Ma L."/>
            <person name="Muller H."/>
            <person name="Nicaud J.-M."/>
            <person name="Nikolski M."/>
            <person name="Oztas S."/>
            <person name="Ozier-Kalogeropoulos O."/>
            <person name="Pellenz S."/>
            <person name="Potier S."/>
            <person name="Richard G.-F."/>
            <person name="Straub M.-L."/>
            <person name="Suleau A."/>
            <person name="Swennen D."/>
            <person name="Tekaia F."/>
            <person name="Wesolowski-Louvel M."/>
            <person name="Westhof E."/>
            <person name="Wirth B."/>
            <person name="Zeniou-Meyer M."/>
            <person name="Zivanovic Y."/>
            <person name="Bolotin-Fukuhara M."/>
            <person name="Thierry A."/>
            <person name="Bouchier C."/>
            <person name="Caudron B."/>
            <person name="Scarpelli C."/>
            <person name="Gaillardin C."/>
            <person name="Weissenbach J."/>
            <person name="Wincker P."/>
            <person name="Souciet J.-L."/>
        </authorList>
    </citation>
    <scope>NUCLEOTIDE SEQUENCE [LARGE SCALE GENOMIC DNA]</scope>
    <source>
        <strain>ATCC 36239 / CBS 767 / BCRC 21394 / JCM 1990 / NBRC 0083 / IGC 2968</strain>
    </source>
</reference>
<comment type="catalytic activity">
    <reaction>
        <text>tRNA(Asn) + L-asparagine + ATP = L-asparaginyl-tRNA(Asn) + AMP + diphosphate + H(+)</text>
        <dbReference type="Rhea" id="RHEA:11180"/>
        <dbReference type="Rhea" id="RHEA-COMP:9659"/>
        <dbReference type="Rhea" id="RHEA-COMP:9674"/>
        <dbReference type="ChEBI" id="CHEBI:15378"/>
        <dbReference type="ChEBI" id="CHEBI:30616"/>
        <dbReference type="ChEBI" id="CHEBI:33019"/>
        <dbReference type="ChEBI" id="CHEBI:58048"/>
        <dbReference type="ChEBI" id="CHEBI:78442"/>
        <dbReference type="ChEBI" id="CHEBI:78515"/>
        <dbReference type="ChEBI" id="CHEBI:456215"/>
        <dbReference type="EC" id="6.1.1.22"/>
    </reaction>
</comment>
<comment type="subcellular location">
    <subcellularLocation>
        <location evidence="1">Cytoplasm</location>
    </subcellularLocation>
</comment>
<comment type="similarity">
    <text evidence="3">Belongs to the class-II aminoacyl-tRNA synthetase family.</text>
</comment>
<name>SYNC_DEBHA</name>
<keyword id="KW-0030">Aminoacyl-tRNA synthetase</keyword>
<keyword id="KW-0067">ATP-binding</keyword>
<keyword id="KW-0963">Cytoplasm</keyword>
<keyword id="KW-0436">Ligase</keyword>
<keyword id="KW-0547">Nucleotide-binding</keyword>
<keyword id="KW-0648">Protein biosynthesis</keyword>
<keyword id="KW-1185">Reference proteome</keyword>
<evidence type="ECO:0000250" key="1"/>
<evidence type="ECO:0000256" key="2">
    <source>
        <dbReference type="SAM" id="MobiDB-lite"/>
    </source>
</evidence>
<evidence type="ECO:0000305" key="3"/>
<protein>
    <recommendedName>
        <fullName>Asparagine--tRNA ligase, cytoplasmic</fullName>
        <ecNumber>6.1.1.22</ecNumber>
    </recommendedName>
    <alternativeName>
        <fullName>Asparaginyl-tRNA synthetase</fullName>
        <shortName>AsnRS</shortName>
    </alternativeName>
</protein>
<accession>Q6BU46</accession>
<sequence>MSQVYVNEKTGADSTDVSGSEQQPFQTPAFALFKNEDAKILVYKQLEDSEEFGYGEISASALKKAKKGAEGLKKKQEKQAKLQEEQRKHQDDAAKKFAEMDLISIKEDESLPQAKKIKLRTVQDNIGTRVVVQGWIHRLRLQKGLGFITLRDGTGFIQCILTGDLAKCKTTHELTLESTVTIKGVINKLPEGKSAPGGVELKVDYYEVVGLAPSGEEAFSNKVQENADPSLLLDQRHLALRGESLSAVMKVRSTLLQAIRRFFAEEGLLEVTPPCMVQTQVEGGSTLFKMDYYGEEAYLTQSSQLYLETCLPALGDVFCVQESFRAEKSHTRRHLSEYTHIESELGFIEFDDLLTHLERLITYVVKYVVEDPVAGPLIKQLNPNFVPPQMPFKRMEYIHALDWLNEHGIPNEDGEKFKFGDDIAEAAERKMTDTIGVPILLIRFPVEIKSFYMQKCADDPRVTESVDVLMPTVGEITGGSMRTYDNDELVAAIKREGLDLDSYYWFTDQRKYGTCPHGGYGLGTERILAWLCDRFTVRDCSLYPRFTGRCKP</sequence>